<sequence>MSDMHSLLIAAILGVVEGLTEFLPVSSTGHMIIVGHLLGFEGDTAKTFEVVIQLGSILAVVVMFWRRLFGLIGIHFGRPLQHEGESKGRLTLIHILLGMIPAVVLGLLFHDTIKSLFNPINVMYALVVGGLLLIAAECLKPKEPRAPGLDDMTYRQAFMIGCFQCLALWPGFSRSGATISGGMLMGVSRYAASEFSFLLAVPMMMGATALDLYKSWGFLTTGDIPMFAVGFITAFVVALIAIKTFLQLIKRISFIPFAIYRFIVAAAVYVVFF</sequence>
<protein>
    <recommendedName>
        <fullName evidence="1">Undecaprenyl-diphosphatase</fullName>
        <ecNumber evidence="1">3.6.1.27</ecNumber>
    </recommendedName>
    <alternativeName>
        <fullName evidence="1">Bacitracin resistance protein</fullName>
    </alternativeName>
    <alternativeName>
        <fullName evidence="1">Undecaprenyl pyrophosphate phosphatase</fullName>
    </alternativeName>
</protein>
<organism>
    <name type="scientific">Escherichia coli (strain 55989 / EAEC)</name>
    <dbReference type="NCBI Taxonomy" id="585055"/>
    <lineage>
        <taxon>Bacteria</taxon>
        <taxon>Pseudomonadati</taxon>
        <taxon>Pseudomonadota</taxon>
        <taxon>Gammaproteobacteria</taxon>
        <taxon>Enterobacterales</taxon>
        <taxon>Enterobacteriaceae</taxon>
        <taxon>Escherichia</taxon>
    </lineage>
</organism>
<dbReference type="EC" id="3.6.1.27" evidence="1"/>
<dbReference type="EMBL" id="CU928145">
    <property type="protein sequence ID" value="CAU99607.1"/>
    <property type="molecule type" value="Genomic_DNA"/>
</dbReference>
<dbReference type="SMR" id="B7LGZ1"/>
<dbReference type="KEGG" id="eck:EC55989_3472"/>
<dbReference type="HOGENOM" id="CLU_060296_2_0_6"/>
<dbReference type="Proteomes" id="UP000000746">
    <property type="component" value="Chromosome"/>
</dbReference>
<dbReference type="GO" id="GO:0005886">
    <property type="term" value="C:plasma membrane"/>
    <property type="evidence" value="ECO:0007669"/>
    <property type="project" value="UniProtKB-SubCell"/>
</dbReference>
<dbReference type="GO" id="GO:0050380">
    <property type="term" value="F:undecaprenyl-diphosphatase activity"/>
    <property type="evidence" value="ECO:0007669"/>
    <property type="project" value="UniProtKB-UniRule"/>
</dbReference>
<dbReference type="GO" id="GO:0071555">
    <property type="term" value="P:cell wall organization"/>
    <property type="evidence" value="ECO:0007669"/>
    <property type="project" value="UniProtKB-KW"/>
</dbReference>
<dbReference type="GO" id="GO:0009252">
    <property type="term" value="P:peptidoglycan biosynthetic process"/>
    <property type="evidence" value="ECO:0007669"/>
    <property type="project" value="UniProtKB-KW"/>
</dbReference>
<dbReference type="GO" id="GO:0008360">
    <property type="term" value="P:regulation of cell shape"/>
    <property type="evidence" value="ECO:0007669"/>
    <property type="project" value="UniProtKB-KW"/>
</dbReference>
<dbReference type="GO" id="GO:0046677">
    <property type="term" value="P:response to antibiotic"/>
    <property type="evidence" value="ECO:0007669"/>
    <property type="project" value="UniProtKB-UniRule"/>
</dbReference>
<dbReference type="HAMAP" id="MF_01006">
    <property type="entry name" value="Undec_diphosphatase"/>
    <property type="match status" value="1"/>
</dbReference>
<dbReference type="InterPro" id="IPR003824">
    <property type="entry name" value="UppP"/>
</dbReference>
<dbReference type="NCBIfam" id="NF001388">
    <property type="entry name" value="PRK00281.1-1"/>
    <property type="match status" value="1"/>
</dbReference>
<dbReference type="NCBIfam" id="NF001389">
    <property type="entry name" value="PRK00281.1-2"/>
    <property type="match status" value="1"/>
</dbReference>
<dbReference type="NCBIfam" id="NF001390">
    <property type="entry name" value="PRK00281.1-4"/>
    <property type="match status" value="1"/>
</dbReference>
<dbReference type="NCBIfam" id="TIGR00753">
    <property type="entry name" value="undec_PP_bacA"/>
    <property type="match status" value="1"/>
</dbReference>
<dbReference type="PANTHER" id="PTHR30622">
    <property type="entry name" value="UNDECAPRENYL-DIPHOSPHATASE"/>
    <property type="match status" value="1"/>
</dbReference>
<dbReference type="PANTHER" id="PTHR30622:SF3">
    <property type="entry name" value="UNDECAPRENYL-DIPHOSPHATASE"/>
    <property type="match status" value="1"/>
</dbReference>
<dbReference type="Pfam" id="PF02673">
    <property type="entry name" value="BacA"/>
    <property type="match status" value="1"/>
</dbReference>
<accession>B7LGZ1</accession>
<reference key="1">
    <citation type="journal article" date="2009" name="PLoS Genet.">
        <title>Organised genome dynamics in the Escherichia coli species results in highly diverse adaptive paths.</title>
        <authorList>
            <person name="Touchon M."/>
            <person name="Hoede C."/>
            <person name="Tenaillon O."/>
            <person name="Barbe V."/>
            <person name="Baeriswyl S."/>
            <person name="Bidet P."/>
            <person name="Bingen E."/>
            <person name="Bonacorsi S."/>
            <person name="Bouchier C."/>
            <person name="Bouvet O."/>
            <person name="Calteau A."/>
            <person name="Chiapello H."/>
            <person name="Clermont O."/>
            <person name="Cruveiller S."/>
            <person name="Danchin A."/>
            <person name="Diard M."/>
            <person name="Dossat C."/>
            <person name="Karoui M.E."/>
            <person name="Frapy E."/>
            <person name="Garry L."/>
            <person name="Ghigo J.M."/>
            <person name="Gilles A.M."/>
            <person name="Johnson J."/>
            <person name="Le Bouguenec C."/>
            <person name="Lescat M."/>
            <person name="Mangenot S."/>
            <person name="Martinez-Jehanne V."/>
            <person name="Matic I."/>
            <person name="Nassif X."/>
            <person name="Oztas S."/>
            <person name="Petit M.A."/>
            <person name="Pichon C."/>
            <person name="Rouy Z."/>
            <person name="Ruf C.S."/>
            <person name="Schneider D."/>
            <person name="Tourret J."/>
            <person name="Vacherie B."/>
            <person name="Vallenet D."/>
            <person name="Medigue C."/>
            <person name="Rocha E.P.C."/>
            <person name="Denamur E."/>
        </authorList>
    </citation>
    <scope>NUCLEOTIDE SEQUENCE [LARGE SCALE GENOMIC DNA]</scope>
    <source>
        <strain>55989 / EAEC</strain>
    </source>
</reference>
<proteinExistence type="inferred from homology"/>
<name>UPPP_ECO55</name>
<gene>
    <name evidence="1" type="primary">uppP</name>
    <name type="ordered locus">EC55989_3472</name>
</gene>
<feature type="chain" id="PRO_1000148813" description="Undecaprenyl-diphosphatase">
    <location>
        <begin position="1"/>
        <end position="273"/>
    </location>
</feature>
<feature type="transmembrane region" description="Helical" evidence="1">
    <location>
        <begin position="6"/>
        <end position="26"/>
    </location>
</feature>
<feature type="transmembrane region" description="Helical" evidence="1">
    <location>
        <begin position="45"/>
        <end position="65"/>
    </location>
</feature>
<feature type="transmembrane region" description="Helical" evidence="1">
    <location>
        <begin position="90"/>
        <end position="110"/>
    </location>
</feature>
<feature type="transmembrane region" description="Helical" evidence="1">
    <location>
        <begin position="116"/>
        <end position="136"/>
    </location>
</feature>
<feature type="transmembrane region" description="Helical" evidence="1">
    <location>
        <begin position="190"/>
        <end position="210"/>
    </location>
</feature>
<feature type="transmembrane region" description="Helical" evidence="1">
    <location>
        <begin position="222"/>
        <end position="242"/>
    </location>
</feature>
<feature type="transmembrane region" description="Helical" evidence="1">
    <location>
        <begin position="252"/>
        <end position="272"/>
    </location>
</feature>
<comment type="function">
    <text evidence="1">Catalyzes the dephosphorylation of undecaprenyl diphosphate (UPP). Confers resistance to bacitracin.</text>
</comment>
<comment type="catalytic activity">
    <reaction evidence="1">
        <text>di-trans,octa-cis-undecaprenyl diphosphate + H2O = di-trans,octa-cis-undecaprenyl phosphate + phosphate + H(+)</text>
        <dbReference type="Rhea" id="RHEA:28094"/>
        <dbReference type="ChEBI" id="CHEBI:15377"/>
        <dbReference type="ChEBI" id="CHEBI:15378"/>
        <dbReference type="ChEBI" id="CHEBI:43474"/>
        <dbReference type="ChEBI" id="CHEBI:58405"/>
        <dbReference type="ChEBI" id="CHEBI:60392"/>
        <dbReference type="EC" id="3.6.1.27"/>
    </reaction>
</comment>
<comment type="subcellular location">
    <subcellularLocation>
        <location evidence="1">Cell inner membrane</location>
        <topology evidence="1">Multi-pass membrane protein</topology>
    </subcellularLocation>
</comment>
<comment type="miscellaneous">
    <text>Bacitracin is thought to be involved in the inhibition of peptidoglycan synthesis by sequestering undecaprenyl diphosphate, thereby reducing the pool of lipid carrier available.</text>
</comment>
<comment type="similarity">
    <text evidence="1">Belongs to the UppP family.</text>
</comment>
<keyword id="KW-0046">Antibiotic resistance</keyword>
<keyword id="KW-0997">Cell inner membrane</keyword>
<keyword id="KW-1003">Cell membrane</keyword>
<keyword id="KW-0133">Cell shape</keyword>
<keyword id="KW-0961">Cell wall biogenesis/degradation</keyword>
<keyword id="KW-0378">Hydrolase</keyword>
<keyword id="KW-0472">Membrane</keyword>
<keyword id="KW-0573">Peptidoglycan synthesis</keyword>
<keyword id="KW-1185">Reference proteome</keyword>
<keyword id="KW-0812">Transmembrane</keyword>
<keyword id="KW-1133">Transmembrane helix</keyword>
<evidence type="ECO:0000255" key="1">
    <source>
        <dbReference type="HAMAP-Rule" id="MF_01006"/>
    </source>
</evidence>